<feature type="chain" id="PRO_0000062742" description="Cell division protein FtsA">
    <location>
        <begin position="1"/>
        <end position="479"/>
    </location>
</feature>
<feature type="region of interest" description="Disordered" evidence="2">
    <location>
        <begin position="417"/>
        <end position="458"/>
    </location>
</feature>
<feature type="compositionally biased region" description="Basic and acidic residues" evidence="2">
    <location>
        <begin position="420"/>
        <end position="440"/>
    </location>
</feature>
<feature type="sequence conflict" description="In Ref. 1; BAA20534." evidence="3" ref="1">
    <original>T</original>
    <variation>A</variation>
    <location>
        <position position="185"/>
    </location>
</feature>
<feature type="sequence conflict" description="In Ref. 1; BAA20534." evidence="3" ref="1">
    <original>E</original>
    <variation>G</variation>
    <location>
        <position position="369"/>
    </location>
</feature>
<feature type="sequence conflict" description="In Ref. 1; BAA20534." evidence="3" ref="1">
    <original>I</original>
    <variation>T</variation>
    <location>
        <position position="405"/>
    </location>
</feature>
<feature type="sequence conflict" description="In Ref. 1; BAA20534." evidence="3" ref="1">
    <original>G</original>
    <variation>D</variation>
    <location>
        <position position="418"/>
    </location>
</feature>
<feature type="sequence conflict" description="In Ref. 1; BAA20534." evidence="3" ref="1">
    <original>T</original>
    <variation>A</variation>
    <location>
        <position position="421"/>
    </location>
</feature>
<feature type="sequence conflict" description="In Ref. 1; BAA20534." evidence="3" ref="1">
    <original>K</original>
    <variation>R</variation>
    <location>
        <position position="441"/>
    </location>
</feature>
<feature type="sequence conflict" description="In Ref. 1; BAA20534." evidence="3" ref="1">
    <original>V</original>
    <variation>L</variation>
    <location>
        <position position="444"/>
    </location>
</feature>
<feature type="sequence conflict" description="In Ref. 1; BAA20534." evidence="3" ref="1">
    <location>
        <begin position="457"/>
        <end position="479"/>
    </location>
</feature>
<sequence>MSRMNTIYAVIDLGSWYIRGMVARKMEDGRVSPISFYEEPANNCIRHGCVHNIDEAAAIIRRIVNQLNENLEDNTHITSLYVGVGGQSIASQEFIVRKAMVPEGEVIRTEHIESLWAEMRGASFPDKEVLDVTDPLFYVDGKQEIQAKGVFCHELEARFQLITARRSVKQNIRIAIEERLGLRLTGILVTPLCEAQVLLSDDELTLGCCYVNIGAGCTSVSIYKNRLLAMLRVLPMGGYNVTRDLTSLRLTEQEAENMKLNHVSMINDNKSNGSFRMTFADKFSEREFRSSEVNRLAKARMDEITANYLNILRLSGLLEDIGAGIILNGGGTKINNYMAAMKKILGEVTPAKIRMDRIDTDNAISFIEEHISTIGLAYKATQPCTDYITTNLGELVSQIETKEEIPANDTVQDLFAQGRQTERKENEQRDNTDRQREDTPKQTVKKKEKTGPSFGDKLKGAFIKFGSLFDEDTNQDNNR</sequence>
<protein>
    <recommendedName>
        <fullName evidence="1">Cell division protein FtsA</fullName>
    </recommendedName>
</protein>
<organism>
    <name type="scientific">Porphyromonas gingivalis (strain ATCC BAA-308 / W83)</name>
    <dbReference type="NCBI Taxonomy" id="242619"/>
    <lineage>
        <taxon>Bacteria</taxon>
        <taxon>Pseudomonadati</taxon>
        <taxon>Bacteroidota</taxon>
        <taxon>Bacteroidia</taxon>
        <taxon>Bacteroidales</taxon>
        <taxon>Porphyromonadaceae</taxon>
        <taxon>Porphyromonas</taxon>
    </lineage>
</organism>
<proteinExistence type="inferred from homology"/>
<keyword id="KW-0131">Cell cycle</keyword>
<keyword id="KW-0132">Cell division</keyword>
<keyword id="KW-0997">Cell inner membrane</keyword>
<keyword id="KW-1003">Cell membrane</keyword>
<keyword id="KW-0472">Membrane</keyword>
<keyword id="KW-1185">Reference proteome</keyword>
<dbReference type="EMBL" id="AB004555">
    <property type="protein sequence ID" value="BAA20534.1"/>
    <property type="molecule type" value="Genomic_DNA"/>
</dbReference>
<dbReference type="EMBL" id="AE015924">
    <property type="protein sequence ID" value="AAQ65770.1"/>
    <property type="molecule type" value="Genomic_DNA"/>
</dbReference>
<dbReference type="RefSeq" id="WP_010956076.1">
    <property type="nucleotide sequence ID" value="NC_002950.2"/>
</dbReference>
<dbReference type="SMR" id="O07827"/>
<dbReference type="STRING" id="242619.PG_0583"/>
<dbReference type="EnsemblBacteria" id="AAQ65770">
    <property type="protein sequence ID" value="AAQ65770"/>
    <property type="gene ID" value="PG_0583"/>
</dbReference>
<dbReference type="KEGG" id="pgi:PG_0583"/>
<dbReference type="eggNOG" id="COG0849">
    <property type="taxonomic scope" value="Bacteria"/>
</dbReference>
<dbReference type="HOGENOM" id="CLU_037850_4_0_10"/>
<dbReference type="Proteomes" id="UP000000588">
    <property type="component" value="Chromosome"/>
</dbReference>
<dbReference type="GO" id="GO:0032153">
    <property type="term" value="C:cell division site"/>
    <property type="evidence" value="ECO:0007669"/>
    <property type="project" value="UniProtKB-UniRule"/>
</dbReference>
<dbReference type="GO" id="GO:0009898">
    <property type="term" value="C:cytoplasmic side of plasma membrane"/>
    <property type="evidence" value="ECO:0007669"/>
    <property type="project" value="UniProtKB-UniRule"/>
</dbReference>
<dbReference type="GO" id="GO:0043093">
    <property type="term" value="P:FtsZ-dependent cytokinesis"/>
    <property type="evidence" value="ECO:0007669"/>
    <property type="project" value="UniProtKB-UniRule"/>
</dbReference>
<dbReference type="Gene3D" id="3.30.420.40">
    <property type="match status" value="1"/>
</dbReference>
<dbReference type="HAMAP" id="MF_02033">
    <property type="entry name" value="FtsA"/>
    <property type="match status" value="1"/>
</dbReference>
<dbReference type="InterPro" id="IPR043129">
    <property type="entry name" value="ATPase_NBD"/>
</dbReference>
<dbReference type="InterPro" id="IPR020823">
    <property type="entry name" value="Cell_div_FtsA"/>
</dbReference>
<dbReference type="InterPro" id="IPR050696">
    <property type="entry name" value="FtsA/MreB"/>
</dbReference>
<dbReference type="InterPro" id="IPR003494">
    <property type="entry name" value="SHS2_FtsA"/>
</dbReference>
<dbReference type="PANTHER" id="PTHR32432:SF4">
    <property type="entry name" value="CELL DIVISION PROTEIN FTSA"/>
    <property type="match status" value="1"/>
</dbReference>
<dbReference type="PANTHER" id="PTHR32432">
    <property type="entry name" value="CELL DIVISION PROTEIN FTSA-RELATED"/>
    <property type="match status" value="1"/>
</dbReference>
<dbReference type="Pfam" id="PF14450">
    <property type="entry name" value="FtsA"/>
    <property type="match status" value="1"/>
</dbReference>
<dbReference type="PIRSF" id="PIRSF003101">
    <property type="entry name" value="FtsA"/>
    <property type="match status" value="1"/>
</dbReference>
<dbReference type="SMART" id="SM00842">
    <property type="entry name" value="FtsA"/>
    <property type="match status" value="1"/>
</dbReference>
<dbReference type="SUPFAM" id="SSF53067">
    <property type="entry name" value="Actin-like ATPase domain"/>
    <property type="match status" value="2"/>
</dbReference>
<accession>O07827</accession>
<evidence type="ECO:0000255" key="1">
    <source>
        <dbReference type="HAMAP-Rule" id="MF_02033"/>
    </source>
</evidence>
<evidence type="ECO:0000256" key="2">
    <source>
        <dbReference type="SAM" id="MobiDB-lite"/>
    </source>
</evidence>
<evidence type="ECO:0000305" key="3"/>
<reference key="1">
    <citation type="submission" date="1997-06" db="EMBL/GenBank/DDBJ databases">
        <authorList>
            <person name="Akifusa S."/>
            <person name="Tamura H."/>
            <person name="Ansai T."/>
            <person name="Takehara T."/>
        </authorList>
    </citation>
    <scope>NUCLEOTIDE SEQUENCE [GENOMIC DNA]</scope>
    <source>
        <strain>381</strain>
    </source>
</reference>
<reference key="2">
    <citation type="journal article" date="2003" name="J. Bacteriol.">
        <title>Complete genome sequence of the oral pathogenic bacterium Porphyromonas gingivalis strain W83.</title>
        <authorList>
            <person name="Nelson K.E."/>
            <person name="Fleischmann R.D."/>
            <person name="DeBoy R.T."/>
            <person name="Paulsen I.T."/>
            <person name="Fouts D.E."/>
            <person name="Eisen J.A."/>
            <person name="Daugherty S.C."/>
            <person name="Dodson R.J."/>
            <person name="Durkin A.S."/>
            <person name="Gwinn M.L."/>
            <person name="Haft D.H."/>
            <person name="Kolonay J.F."/>
            <person name="Nelson W.C."/>
            <person name="Mason T.M."/>
            <person name="Tallon L."/>
            <person name="Gray J."/>
            <person name="Granger D."/>
            <person name="Tettelin H."/>
            <person name="Dong H."/>
            <person name="Galvin J.L."/>
            <person name="Duncan M.J."/>
            <person name="Dewhirst F.E."/>
            <person name="Fraser C.M."/>
        </authorList>
    </citation>
    <scope>NUCLEOTIDE SEQUENCE [LARGE SCALE GENOMIC DNA]</scope>
    <source>
        <strain>ATCC BAA-308 / W83</strain>
    </source>
</reference>
<name>FTSA_PORGI</name>
<gene>
    <name evidence="1" type="primary">ftsA</name>
    <name type="ordered locus">PG_0583</name>
</gene>
<comment type="function">
    <text evidence="1">Cell division protein that is involved in the assembly of the Z ring. May serve as a membrane anchor for the Z ring.</text>
</comment>
<comment type="subunit">
    <text evidence="1">Self-interacts. Interacts with FtsZ.</text>
</comment>
<comment type="subcellular location">
    <subcellularLocation>
        <location evidence="1">Cell inner membrane</location>
        <topology evidence="1">Peripheral membrane protein</topology>
        <orientation evidence="1">Cytoplasmic side</orientation>
    </subcellularLocation>
    <text evidence="1">Localizes to the Z ring in an FtsZ-dependent manner. Targeted to the membrane through a conserved C-terminal amphipathic helix.</text>
</comment>
<comment type="similarity">
    <text evidence="1">Belongs to the FtsA/MreB family.</text>
</comment>